<feature type="chain" id="PRO_0000114706" description="Histone deacetylase 7">
    <location>
        <begin position="1"/>
        <end position="938"/>
    </location>
</feature>
<feature type="region of interest" description="Interaction with MEF2C">
    <location>
        <begin position="1"/>
        <end position="121"/>
    </location>
</feature>
<feature type="region of interest" description="Disordered" evidence="2">
    <location>
        <begin position="1"/>
        <end position="40"/>
    </location>
</feature>
<feature type="region of interest" description="Transcription repression 1" evidence="3">
    <location>
        <begin position="2"/>
        <end position="254"/>
    </location>
</feature>
<feature type="region of interest" description="Interaction with MEF2A" evidence="7">
    <location>
        <begin position="72"/>
        <end position="172"/>
    </location>
</feature>
<feature type="region of interest" description="Disordered" evidence="2">
    <location>
        <begin position="155"/>
        <end position="280"/>
    </location>
</feature>
<feature type="region of interest" description="Transcription repression 2" evidence="3">
    <location>
        <begin position="241"/>
        <end position="533"/>
    </location>
</feature>
<feature type="region of interest" description="Disordered" evidence="2">
    <location>
        <begin position="331"/>
        <end position="361"/>
    </location>
</feature>
<feature type="region of interest" description="Disordered" evidence="2">
    <location>
        <begin position="373"/>
        <end position="463"/>
    </location>
</feature>
<feature type="region of interest" description="Disordered" evidence="2">
    <location>
        <begin position="472"/>
        <end position="491"/>
    </location>
</feature>
<feature type="region of interest" description="Histone deacetylase" evidence="3">
    <location>
        <begin position="505"/>
        <end position="852"/>
    </location>
</feature>
<feature type="region of interest" description="Interaction with SIN3A" evidence="3">
    <location>
        <begin position="864"/>
        <end position="938"/>
    </location>
</feature>
<feature type="short sequence motif" description="Nuclear export signal" evidence="6">
    <location>
        <begin position="904"/>
        <end position="938"/>
    </location>
</feature>
<feature type="compositionally biased region" description="Basic and acidic residues" evidence="2">
    <location>
        <begin position="190"/>
        <end position="204"/>
    </location>
</feature>
<feature type="compositionally biased region" description="Low complexity" evidence="2">
    <location>
        <begin position="220"/>
        <end position="235"/>
    </location>
</feature>
<feature type="compositionally biased region" description="Low complexity" evidence="2">
    <location>
        <begin position="350"/>
        <end position="361"/>
    </location>
</feature>
<feature type="compositionally biased region" description="Low complexity" evidence="2">
    <location>
        <begin position="429"/>
        <end position="448"/>
    </location>
</feature>
<feature type="compositionally biased region" description="Low complexity" evidence="2">
    <location>
        <begin position="479"/>
        <end position="491"/>
    </location>
</feature>
<feature type="active site" evidence="14 15">
    <location>
        <position position="657"/>
    </location>
</feature>
<feature type="binding site" evidence="1">
    <location>
        <position position="520"/>
    </location>
    <ligand>
        <name>Zn(2+)</name>
        <dbReference type="ChEBI" id="CHEBI:29105"/>
    </ligand>
</feature>
<feature type="binding site" evidence="1">
    <location>
        <position position="522"/>
    </location>
    <ligand>
        <name>Zn(2+)</name>
        <dbReference type="ChEBI" id="CHEBI:29105"/>
    </ligand>
</feature>
<feature type="binding site" evidence="1">
    <location>
        <position position="528"/>
    </location>
    <ligand>
        <name>Zn(2+)</name>
        <dbReference type="ChEBI" id="CHEBI:29105"/>
    </ligand>
</feature>
<feature type="binding site" evidence="1">
    <location>
        <position position="605"/>
    </location>
    <ligand>
        <name>Zn(2+)</name>
        <dbReference type="ChEBI" id="CHEBI:29105"/>
    </ligand>
</feature>
<feature type="site" description="Contributes to catalysis" evidence="1">
    <location>
        <position position="830"/>
    </location>
</feature>
<feature type="modified residue" description="Phosphoserine" evidence="1">
    <location>
        <position position="132"/>
    </location>
</feature>
<feature type="modified residue" description="Phosphoserine; by MARK2, MARK3 and PKD/PRKD1" evidence="16">
    <location>
        <position position="178"/>
    </location>
</feature>
<feature type="modified residue" description="Phosphoserine; by PKD/PRKD2" evidence="1">
    <location>
        <position position="204"/>
    </location>
</feature>
<feature type="modified residue" description="Phosphoserine; by PKD/PRKD1" evidence="8">
    <location>
        <position position="344"/>
    </location>
</feature>
<feature type="modified residue" description="Phosphoserine" evidence="1">
    <location>
        <position position="350"/>
    </location>
</feature>
<feature type="modified residue" description="Phosphoserine" evidence="1">
    <location>
        <position position="398"/>
    </location>
</feature>
<feature type="modified residue" description="Phosphoserine; by PKD/PRKD1" evidence="8">
    <location>
        <position position="479"/>
    </location>
</feature>
<feature type="modified residue" description="Phosphoserine" evidence="1">
    <location>
        <position position="480"/>
    </location>
</feature>
<feature type="modified residue" description="Phosphoserine" evidence="17">
    <location>
        <position position="582"/>
    </location>
</feature>
<feature type="splice variant" id="VSP_007432" description="In isoform 2, isoform 3 and isoform 5." evidence="11">
    <location>
        <begin position="1"/>
        <end position="22"/>
    </location>
</feature>
<feature type="splice variant" id="VSP_007433" description="In isoform 4 and isoform 6." evidence="11">
    <location>
        <begin position="138"/>
        <end position="161"/>
    </location>
</feature>
<feature type="splice variant" id="VSP_007434" description="In isoform 2, isoform 3 and isoform 4." evidence="11">
    <original>E</original>
    <variation>EALLGQRLRLQETSLAPFALPTVSLLPAITLGLPAPAR</variation>
    <location>
        <position position="249"/>
    </location>
</feature>
<feature type="splice variant" id="VSP_007435" description="In isoform 2 and isoform 4." evidence="11">
    <location>
        <begin position="376"/>
        <end position="382"/>
    </location>
</feature>
<feature type="mutagenesis site" description="Strong reduction of CaMK1-dependent nuclear export. Reduces interaction with YWHAE." evidence="7">
    <original>S</original>
    <variation>A</variation>
    <location>
        <position position="178"/>
    </location>
</feature>
<feature type="mutagenesis site" description="Strong reduction of CaMK1-dependent nuclear export. Reduces interaction with YWHAE." evidence="7">
    <original>S</original>
    <variation>A</variation>
    <location>
        <position position="344"/>
    </location>
</feature>
<feature type="mutagenesis site" description="Strong reduction of CaMK1-dependent nuclear export. Reduces interaction with YWHAE." evidence="7">
    <original>S</original>
    <variation>A</variation>
    <location>
        <position position="479"/>
    </location>
</feature>
<feature type="mutagenesis site" description="Abolishes deacetylase activity, but not the interaction with HDAC2 and HDAC3." evidence="4 5">
    <original>H</original>
    <variation>A</variation>
    <location>
        <position position="657"/>
    </location>
</feature>
<feature type="mutagenesis site" description="Disrupts the dot-like nuclear pattern." evidence="4">
    <original>D</original>
    <variation>A</variation>
    <location>
        <position position="692"/>
    </location>
</feature>
<feature type="mutagenesis site" description="Disrupts the dot-like nuclear pattern. Abolishes deacetylase activity, but not the interaction with HDAC2 and HDAC3." evidence="4">
    <original>D</original>
    <variation>A</variation>
    <location>
        <position position="694"/>
    </location>
</feature>
<feature type="mutagenesis site" description="Abolishes deacetylase activity, but not the interaction with HDAC2 and HDAC3." evidence="4">
    <original>H</original>
    <variation>A</variation>
    <location>
        <position position="717"/>
    </location>
</feature>
<feature type="sequence conflict" description="In Ref. 2; BAC27161." evidence="12" ref="2">
    <original>E</original>
    <variation>G</variation>
    <location>
        <position position="169"/>
    </location>
</feature>
<feature type="sequence conflict" description="In Ref. 2; BAC29493." evidence="12" ref="2">
    <original>K</original>
    <variation>M</variation>
    <location>
        <position position="183"/>
    </location>
</feature>
<feature type="sequence conflict" description="In Ref. 2; BAC27161." evidence="12" ref="2">
    <original>P</original>
    <variation>T</variation>
    <location>
        <position position="228"/>
    </location>
</feature>
<feature type="sequence conflict" description="In Ref. 1; AAF31419 and 2; BAC40598/BAC40666." evidence="12" ref="1 2">
    <original>L</original>
    <variation>M</variation>
    <location>
        <position position="487"/>
    </location>
</feature>
<feature type="sequence conflict" description="In Ref. 2; BAC29493." evidence="12" ref="2">
    <original>K</original>
    <variation>R</variation>
    <location>
        <position position="645"/>
    </location>
</feature>
<feature type="sequence conflict" description="In Ref. 2; BAC40598." evidence="12" ref="2">
    <original>S</original>
    <variation>P</variation>
    <location>
        <position position="661"/>
    </location>
</feature>
<feature type="sequence conflict" description="In Ref. 1; AAF31419." evidence="12" ref="1">
    <original>G</original>
    <variation>A</variation>
    <location>
        <position position="737"/>
    </location>
</feature>
<comment type="function">
    <text evidence="1 3 4 5">Responsible for the deacetylation of lysine residues on the N-terminal part of the core histones (H2A, H2B, H3 and H4) (PubMed:10640276, PubMed:10984530, PubMed:11279209). Histone deacetylation gives a tag for epigenetic repression and plays an important role in transcriptional regulation, cell cycle progression and developmental events (PubMed:10640276, PubMed:10984530, PubMed:11279209). Histone deacetylases act via the formation of large multiprotein complexes (PubMed:10640276, PubMed:10984530, PubMed:11279209). Involved in muscle maturation by repressing transcription of myocyte enhancer factors such as MEF2A, MEF2B and MEF2C (PubMed:11279209). During muscle differentiation, it shuttles into the cytoplasm, allowing the expression of myocyte enhancer factors (PubMed:11279209). Positively regulates the transcriptional repressor activity of FOXP3 (By similarity). Serves as a corepressor of RARA, causing its deacetylation and inhibition of RARE DNA element binding (By similarity). In association with RARA, plays a role in the repression of microRNA-10a and thereby in the inflammatory response (By similarity). Also acetylates non-histone proteins, such as ALKBH5 (By similarity).</text>
</comment>
<comment type="catalytic activity">
    <reaction evidence="4 5 13">
        <text>N(6)-acetyl-L-lysyl-[histone] + H2O = L-lysyl-[histone] + acetate</text>
        <dbReference type="Rhea" id="RHEA:58196"/>
        <dbReference type="Rhea" id="RHEA-COMP:9845"/>
        <dbReference type="Rhea" id="RHEA-COMP:11338"/>
        <dbReference type="ChEBI" id="CHEBI:15377"/>
        <dbReference type="ChEBI" id="CHEBI:29969"/>
        <dbReference type="ChEBI" id="CHEBI:30089"/>
        <dbReference type="ChEBI" id="CHEBI:61930"/>
        <dbReference type="EC" id="3.5.1.98"/>
    </reaction>
</comment>
<comment type="catalytic activity">
    <reaction evidence="1">
        <text>N(6)-acetyl-L-lysyl-[protein] + H2O = L-lysyl-[protein] + acetate</text>
        <dbReference type="Rhea" id="RHEA:58108"/>
        <dbReference type="Rhea" id="RHEA-COMP:9752"/>
        <dbReference type="Rhea" id="RHEA-COMP:10731"/>
        <dbReference type="ChEBI" id="CHEBI:15377"/>
        <dbReference type="ChEBI" id="CHEBI:29969"/>
        <dbReference type="ChEBI" id="CHEBI:30089"/>
        <dbReference type="ChEBI" id="CHEBI:61930"/>
    </reaction>
    <physiologicalReaction direction="left-to-right" evidence="1">
        <dbReference type="Rhea" id="RHEA:58109"/>
    </physiologicalReaction>
</comment>
<comment type="activity regulation">
    <text evidence="3">Its activity is inhibited by Trichostatin A (TSA), a known histone deacetylase inhibitor.</text>
</comment>
<comment type="subunit">
    <text evidence="1 3 4 5 7 9 10">Interacts with HDAC1, HDAC2, HDAC3, HDAC4, HDAC5, NCOR1, NCOR2, SIN3A, SIN3B, RBBP4, RBBP7, MTA1L1, SAP30 and MBD3 (PubMed:10640276, PubMed:10984530). Interacts with KAT5 and EDNRA (By similarity). Interacts with the 14-3-3 protein YWHAE, MEF2A, MEF2B and MEF2C (PubMed:11279209, PubMed:11585834). Interacts with ZMYND15 (PubMed:20675388). Interacts with KDM5B (By similarity). Interacts with PML (By similarity). Interacts with FOXP3 (PubMed:19696312). Interacts with RARA (By similarity).</text>
</comment>
<comment type="interaction">
    <interactant intactId="EBI-643830">
        <id>Q8C2B3</id>
    </interactant>
    <interactant intactId="EBI-356480">
        <id>P62259</id>
        <label>Ywhae</label>
    </interactant>
    <organismsDiffer>false</organismsDiffer>
    <experiments>5</experiments>
</comment>
<comment type="interaction">
    <interactant intactId="EBI-15705168">
        <id>Q8C2B3-1</id>
    </interactant>
    <interactant intactId="EBI-1181072">
        <id>Q15139</id>
        <label>PRKD1</label>
    </interactant>
    <organismsDiffer>true</organismsDiffer>
    <experiments>3</experiments>
</comment>
<comment type="subcellular location">
    <subcellularLocation>
        <location evidence="3 5 7">Nucleus</location>
    </subcellularLocation>
    <subcellularLocation>
        <location evidence="5 7">Cytoplasm</location>
    </subcellularLocation>
    <text evidence="3 5 7">In the nucleus, it associates with distinct subnuclear dot-like structures (PubMed:10640276). Shuttles between the nucleus and the cytoplasm (PubMed:11279209, PubMed:11585834). In muscle cells, it shuttles into the cytoplasm during myocyte differentiation (PubMed:11279209). The export to cytoplasm depends on the interaction with the 14-3-3 protein YWHAE and is due to its phosphorylation (PubMed:11585834).</text>
</comment>
<comment type="alternative products">
    <event type="alternative splicing"/>
    <isoform>
        <id>Q8C2B3-1</id>
        <name>1</name>
        <sequence type="displayed"/>
    </isoform>
    <isoform>
        <id>Q8C2B3-2</id>
        <name>2</name>
        <sequence type="described" ref="VSP_007432 VSP_007434 VSP_007435"/>
    </isoform>
    <isoform>
        <id>Q8C2B3-3</id>
        <name>3</name>
        <sequence type="described" ref="VSP_007432 VSP_007434"/>
    </isoform>
    <isoform>
        <id>Q8C2B3-4</id>
        <name>4</name>
        <sequence type="described" ref="VSP_007433 VSP_007434 VSP_007435"/>
    </isoform>
    <isoform>
        <id>Q8C2B3-5</id>
        <name>5</name>
        <sequence type="described" ref="VSP_007432"/>
    </isoform>
    <isoform>
        <id>Q8C2B3-6</id>
        <name>6</name>
        <sequence type="described" ref="VSP_007433"/>
    </isoform>
</comment>
<comment type="tissue specificity">
    <text evidence="3 5">Highly expressed in heart and lung. Expressed at intermediate level in muscle.</text>
</comment>
<comment type="PTM">
    <text evidence="1">May be phosphorylated by CaMK1. Phosphorylated by the PKC kinases PKN1 and PKN2, impairing nuclear import. Phosphorylation at Ser-178 by MARK2, MARK3 and PRKD1 promotes interaction with 14-3-3 proteins and export from the nucleus. Phosphorylation at Ser-178 is a prerequisite for phosphorylation at Ser-204 (By similarity).</text>
</comment>
<comment type="similarity">
    <text evidence="12">Belongs to the histone deacetylase family. HD type 2 subfamily.</text>
</comment>
<reference key="1">
    <citation type="journal article" date="2000" name="Genes Dev.">
        <title>Isolation of a novel histone deacetylase reveals that class I and class II deacetylases promote SMRT-mediated repression.</title>
        <authorList>
            <person name="Kao H.-Y."/>
            <person name="Downes M."/>
            <person name="Ordentlich P."/>
            <person name="Evans R.M."/>
        </authorList>
    </citation>
    <scope>NUCLEOTIDE SEQUENCE [MRNA] (ISOFORM 1)</scope>
    <scope>FUNCTION</scope>
    <scope>ACTIVITY REGULATION</scope>
    <scope>CATALYTIC ACTIVITY</scope>
    <scope>SUBCELLULAR LOCATION</scope>
    <scope>TISSUE SPECIFICITY</scope>
    <scope>INTERACTION WITH NCOR2 AND SIN3A</scope>
    <source>
        <strain>C57BL/6J</strain>
        <tissue>Brain</tissue>
    </source>
</reference>
<reference key="2">
    <citation type="journal article" date="2005" name="Science">
        <title>The transcriptional landscape of the mammalian genome.</title>
        <authorList>
            <person name="Carninci P."/>
            <person name="Kasukawa T."/>
            <person name="Katayama S."/>
            <person name="Gough J."/>
            <person name="Frith M.C."/>
            <person name="Maeda N."/>
            <person name="Oyama R."/>
            <person name="Ravasi T."/>
            <person name="Lenhard B."/>
            <person name="Wells C."/>
            <person name="Kodzius R."/>
            <person name="Shimokawa K."/>
            <person name="Bajic V.B."/>
            <person name="Brenner S.E."/>
            <person name="Batalov S."/>
            <person name="Forrest A.R."/>
            <person name="Zavolan M."/>
            <person name="Davis M.J."/>
            <person name="Wilming L.G."/>
            <person name="Aidinis V."/>
            <person name="Allen J.E."/>
            <person name="Ambesi-Impiombato A."/>
            <person name="Apweiler R."/>
            <person name="Aturaliya R.N."/>
            <person name="Bailey T.L."/>
            <person name="Bansal M."/>
            <person name="Baxter L."/>
            <person name="Beisel K.W."/>
            <person name="Bersano T."/>
            <person name="Bono H."/>
            <person name="Chalk A.M."/>
            <person name="Chiu K.P."/>
            <person name="Choudhary V."/>
            <person name="Christoffels A."/>
            <person name="Clutterbuck D.R."/>
            <person name="Crowe M.L."/>
            <person name="Dalla E."/>
            <person name="Dalrymple B.P."/>
            <person name="de Bono B."/>
            <person name="Della Gatta G."/>
            <person name="di Bernardo D."/>
            <person name="Down T."/>
            <person name="Engstrom P."/>
            <person name="Fagiolini M."/>
            <person name="Faulkner G."/>
            <person name="Fletcher C.F."/>
            <person name="Fukushima T."/>
            <person name="Furuno M."/>
            <person name="Futaki S."/>
            <person name="Gariboldi M."/>
            <person name="Georgii-Hemming P."/>
            <person name="Gingeras T.R."/>
            <person name="Gojobori T."/>
            <person name="Green R.E."/>
            <person name="Gustincich S."/>
            <person name="Harbers M."/>
            <person name="Hayashi Y."/>
            <person name="Hensch T.K."/>
            <person name="Hirokawa N."/>
            <person name="Hill D."/>
            <person name="Huminiecki L."/>
            <person name="Iacono M."/>
            <person name="Ikeo K."/>
            <person name="Iwama A."/>
            <person name="Ishikawa T."/>
            <person name="Jakt M."/>
            <person name="Kanapin A."/>
            <person name="Katoh M."/>
            <person name="Kawasawa Y."/>
            <person name="Kelso J."/>
            <person name="Kitamura H."/>
            <person name="Kitano H."/>
            <person name="Kollias G."/>
            <person name="Krishnan S.P."/>
            <person name="Kruger A."/>
            <person name="Kummerfeld S.K."/>
            <person name="Kurochkin I.V."/>
            <person name="Lareau L.F."/>
            <person name="Lazarevic D."/>
            <person name="Lipovich L."/>
            <person name="Liu J."/>
            <person name="Liuni S."/>
            <person name="McWilliam S."/>
            <person name="Madan Babu M."/>
            <person name="Madera M."/>
            <person name="Marchionni L."/>
            <person name="Matsuda H."/>
            <person name="Matsuzawa S."/>
            <person name="Miki H."/>
            <person name="Mignone F."/>
            <person name="Miyake S."/>
            <person name="Morris K."/>
            <person name="Mottagui-Tabar S."/>
            <person name="Mulder N."/>
            <person name="Nakano N."/>
            <person name="Nakauchi H."/>
            <person name="Ng P."/>
            <person name="Nilsson R."/>
            <person name="Nishiguchi S."/>
            <person name="Nishikawa S."/>
            <person name="Nori F."/>
            <person name="Ohara O."/>
            <person name="Okazaki Y."/>
            <person name="Orlando V."/>
            <person name="Pang K.C."/>
            <person name="Pavan W.J."/>
            <person name="Pavesi G."/>
            <person name="Pesole G."/>
            <person name="Petrovsky N."/>
            <person name="Piazza S."/>
            <person name="Reed J."/>
            <person name="Reid J.F."/>
            <person name="Ring B.Z."/>
            <person name="Ringwald M."/>
            <person name="Rost B."/>
            <person name="Ruan Y."/>
            <person name="Salzberg S.L."/>
            <person name="Sandelin A."/>
            <person name="Schneider C."/>
            <person name="Schoenbach C."/>
            <person name="Sekiguchi K."/>
            <person name="Semple C.A."/>
            <person name="Seno S."/>
            <person name="Sessa L."/>
            <person name="Sheng Y."/>
            <person name="Shibata Y."/>
            <person name="Shimada H."/>
            <person name="Shimada K."/>
            <person name="Silva D."/>
            <person name="Sinclair B."/>
            <person name="Sperling S."/>
            <person name="Stupka E."/>
            <person name="Sugiura K."/>
            <person name="Sultana R."/>
            <person name="Takenaka Y."/>
            <person name="Taki K."/>
            <person name="Tammoja K."/>
            <person name="Tan S.L."/>
            <person name="Tang S."/>
            <person name="Taylor M.S."/>
            <person name="Tegner J."/>
            <person name="Teichmann S.A."/>
            <person name="Ueda H.R."/>
            <person name="van Nimwegen E."/>
            <person name="Verardo R."/>
            <person name="Wei C.L."/>
            <person name="Yagi K."/>
            <person name="Yamanishi H."/>
            <person name="Zabarovsky E."/>
            <person name="Zhu S."/>
            <person name="Zimmer A."/>
            <person name="Hide W."/>
            <person name="Bult C."/>
            <person name="Grimmond S.M."/>
            <person name="Teasdale R.D."/>
            <person name="Liu E.T."/>
            <person name="Brusic V."/>
            <person name="Quackenbush J."/>
            <person name="Wahlestedt C."/>
            <person name="Mattick J.S."/>
            <person name="Hume D.A."/>
            <person name="Kai C."/>
            <person name="Sasaki D."/>
            <person name="Tomaru Y."/>
            <person name="Fukuda S."/>
            <person name="Kanamori-Katayama M."/>
            <person name="Suzuki M."/>
            <person name="Aoki J."/>
            <person name="Arakawa T."/>
            <person name="Iida J."/>
            <person name="Imamura K."/>
            <person name="Itoh M."/>
            <person name="Kato T."/>
            <person name="Kawaji H."/>
            <person name="Kawagashira N."/>
            <person name="Kawashima T."/>
            <person name="Kojima M."/>
            <person name="Kondo S."/>
            <person name="Konno H."/>
            <person name="Nakano K."/>
            <person name="Ninomiya N."/>
            <person name="Nishio T."/>
            <person name="Okada M."/>
            <person name="Plessy C."/>
            <person name="Shibata K."/>
            <person name="Shiraki T."/>
            <person name="Suzuki S."/>
            <person name="Tagami M."/>
            <person name="Waki K."/>
            <person name="Watahiki A."/>
            <person name="Okamura-Oho Y."/>
            <person name="Suzuki H."/>
            <person name="Kawai J."/>
            <person name="Hayashizaki Y."/>
        </authorList>
    </citation>
    <scope>NUCLEOTIDE SEQUENCE [LARGE SCALE MRNA] (ISOFORMS 2; 3; 4; 5 AND 6)</scope>
    <source>
        <strain>C57BL/6J</strain>
        <strain>NOD</strain>
        <tissue>Bone</tissue>
        <tissue>Retina</tissue>
        <tissue>Thymus</tissue>
    </source>
</reference>
<reference key="3">
    <citation type="journal article" date="2004" name="Genome Res.">
        <title>The status, quality, and expansion of the NIH full-length cDNA project: the Mammalian Gene Collection (MGC).</title>
        <authorList>
            <consortium name="The MGC Project Team"/>
        </authorList>
    </citation>
    <scope>NUCLEOTIDE SEQUENCE [LARGE SCALE MRNA] (ISOFORM 1)</scope>
    <source>
        <strain>C57BL/6J</strain>
        <tissue>Brain</tissue>
    </source>
</reference>
<reference key="4">
    <citation type="journal article" date="2000" name="Proc. Natl. Acad. Sci. U.S.A.">
        <title>Identification of a nuclear domain with deacetylase activity.</title>
        <authorList>
            <person name="Downes M."/>
            <person name="Ordentlich P."/>
            <person name="Kao H.-Y."/>
            <person name="Alvarez J.G.A."/>
            <person name="Evans R.M."/>
        </authorList>
    </citation>
    <scope>FUNCTION</scope>
    <scope>ACTIVE SITE</scope>
    <scope>INTERACTION WITH HDAC1; HDAC2; HDAC3; HDAC4; HDAC5; NCOR1; NCOR2; SIN3A; SIN3B; RBBP4; RBBP7; MTA1L1; SAP30 AND MBD3</scope>
    <scope>MUTAGENESIS OF HIS-657; ASP-692; ASP-694 AND HIS-717</scope>
</reference>
<reference key="5">
    <citation type="journal article" date="2001" name="J. Biol. Chem.">
        <title>A dynamic role for HDAC7 in MEF2-mediated muscle differentiation.</title>
        <authorList>
            <person name="Dressel U."/>
            <person name="Bailey P.J."/>
            <person name="Wang S.-C.M."/>
            <person name="Downes M."/>
            <person name="Evans R.M."/>
            <person name="Muscat G.E.O."/>
        </authorList>
    </citation>
    <scope>FUNCTION</scope>
    <scope>SUBCELLULAR LOCATION</scope>
    <scope>TISSUE SPECIFICITY</scope>
    <scope>INTERACTION WITH MEF2C</scope>
    <scope>ACTIVE SITE</scope>
    <scope>MUTAGENESIS OF HIS-657</scope>
</reference>
<reference key="6">
    <citation type="journal article" date="2001" name="J. Biol. Chem.">
        <title>Mechanism for nucleocytoplasmic shuttling of histone deacetylase 7.</title>
        <authorList>
            <person name="Kao H.-Y."/>
            <person name="Verdel A."/>
            <person name="Tsai C.-C."/>
            <person name="Simon C."/>
            <person name="Juguilon H."/>
            <person name="Khochbin S."/>
        </authorList>
    </citation>
    <scope>SUBCELLULAR LOCATION</scope>
    <scope>PHOSPHORYLATION</scope>
    <scope>INTERACTION WITH YWHAE; MEF2A; MEF2B AND MEF2C</scope>
    <scope>MUTAGENESIS OF SER-178; SER-344 AND SER-479</scope>
</reference>
<reference key="7">
    <citation type="journal article" date="2001" name="Mol. Cell. Biol.">
        <title>Identification of a signal-responsive nuclear export sequence in class II histone deacetylases.</title>
        <authorList>
            <person name="McKinsey T.A."/>
            <person name="Zhang C.-L."/>
            <person name="Olson E.N."/>
        </authorList>
    </citation>
    <scope>NUCLEAR EXPORT SIGNAL</scope>
</reference>
<reference key="8">
    <citation type="journal article" date="2007" name="Proc. Natl. Acad. Sci. U.S.A.">
        <title>Large-scale phosphorylation analysis of mouse liver.</title>
        <authorList>
            <person name="Villen J."/>
            <person name="Beausoleil S.A."/>
            <person name="Gerber S.A."/>
            <person name="Gygi S.P."/>
        </authorList>
    </citation>
    <scope>IDENTIFICATION BY MASS SPECTROMETRY [LARGE SCALE ANALYSIS]</scope>
    <source>
        <tissue>Liver</tissue>
    </source>
</reference>
<reference key="9">
    <citation type="journal article" date="2008" name="Proc. Natl. Acad. Sci. U.S.A.">
        <title>Control of endothelial cell proliferation and migration by VEGF signaling to histone deacetylase 7.</title>
        <authorList>
            <person name="Wang S."/>
            <person name="Li X."/>
            <person name="Parra M."/>
            <person name="Verdin E."/>
            <person name="Bassel-Duby R."/>
            <person name="Olson E.N."/>
        </authorList>
    </citation>
    <scope>PHOSPHORYLATION AT SER-178; SER-344 AND SER-479</scope>
</reference>
<reference key="10">
    <citation type="journal article" date="2009" name="Mol. Cell. Proteomics">
        <title>Large scale localization of protein phosphorylation by use of electron capture dissociation mass spectrometry.</title>
        <authorList>
            <person name="Sweet S.M."/>
            <person name="Bailey C.M."/>
            <person name="Cunningham D.L."/>
            <person name="Heath J.K."/>
            <person name="Cooper H.J."/>
        </authorList>
    </citation>
    <scope>IDENTIFICATION BY MASS SPECTROMETRY [LARGE SCALE ANALYSIS]</scope>
    <source>
        <tissue>Embryonic fibroblast</tissue>
    </source>
</reference>
<reference key="11">
    <citation type="journal article" date="2009" name="Science">
        <title>Eos mediates Foxp3-dependent gene silencing in CD4+ regulatory T cells.</title>
        <authorList>
            <person name="Pan F."/>
            <person name="Yu H."/>
            <person name="Dang E.V."/>
            <person name="Barbi J."/>
            <person name="Pan X."/>
            <person name="Grosso J.F."/>
            <person name="Jinasena D."/>
            <person name="Sharma S.M."/>
            <person name="McCadden E.M."/>
            <person name="Getnet D."/>
            <person name="Drake C.G."/>
            <person name="Liu J.O."/>
            <person name="Ostrowski M.C."/>
            <person name="Pardoll D.M."/>
        </authorList>
    </citation>
    <scope>INTERACTION WITH FOXP3</scope>
</reference>
<reference key="12">
    <citation type="journal article" date="2010" name="Cell">
        <title>A tissue-specific atlas of mouse protein phosphorylation and expression.</title>
        <authorList>
            <person name="Huttlin E.L."/>
            <person name="Jedrychowski M.P."/>
            <person name="Elias J.E."/>
            <person name="Goswami T."/>
            <person name="Rad R."/>
            <person name="Beausoleil S.A."/>
            <person name="Villen J."/>
            <person name="Haas W."/>
            <person name="Sowa M.E."/>
            <person name="Gygi S.P."/>
        </authorList>
    </citation>
    <scope>PHOSPHORYLATION [LARGE SCALE ANALYSIS] AT SER-582</scope>
    <scope>IDENTIFICATION BY MASS SPECTROMETRY [LARGE SCALE ANALYSIS]</scope>
    <source>
        <tissue>Brown adipose tissue</tissue>
        <tissue>Heart</tissue>
        <tissue>Kidney</tissue>
        <tissue>Lung</tissue>
        <tissue>Spleen</tissue>
    </source>
</reference>
<reference key="13">
    <citation type="journal article" date="2010" name="J. Biol. Chem.">
        <title>Zmynd15 encodes a histone deacetylase-dependent transcriptional repressor essential for spermiogenesis and male fertility.</title>
        <authorList>
            <person name="Yan W."/>
            <person name="Si Y."/>
            <person name="Slaymaker S."/>
            <person name="Li J."/>
            <person name="Zheng H."/>
            <person name="Young D.L."/>
            <person name="Aslanian A."/>
            <person name="Saunders L."/>
            <person name="Verdin E."/>
            <person name="Charo I.F."/>
        </authorList>
    </citation>
    <scope>INTERACTION WITH ZMYND15</scope>
</reference>
<evidence type="ECO:0000250" key="1">
    <source>
        <dbReference type="UniProtKB" id="Q8WUI4"/>
    </source>
</evidence>
<evidence type="ECO:0000256" key="2">
    <source>
        <dbReference type="SAM" id="MobiDB-lite"/>
    </source>
</evidence>
<evidence type="ECO:0000269" key="3">
    <source>
    </source>
</evidence>
<evidence type="ECO:0000269" key="4">
    <source>
    </source>
</evidence>
<evidence type="ECO:0000269" key="5">
    <source>
    </source>
</evidence>
<evidence type="ECO:0000269" key="6">
    <source>
    </source>
</evidence>
<evidence type="ECO:0000269" key="7">
    <source>
    </source>
</evidence>
<evidence type="ECO:0000269" key="8">
    <source>
    </source>
</evidence>
<evidence type="ECO:0000269" key="9">
    <source>
    </source>
</evidence>
<evidence type="ECO:0000269" key="10">
    <source>
    </source>
</evidence>
<evidence type="ECO:0000303" key="11">
    <source>
    </source>
</evidence>
<evidence type="ECO:0000305" key="12"/>
<evidence type="ECO:0000305" key="13">
    <source>
    </source>
</evidence>
<evidence type="ECO:0000305" key="14">
    <source>
    </source>
</evidence>
<evidence type="ECO:0000305" key="15">
    <source>
    </source>
</evidence>
<evidence type="ECO:0000305" key="16">
    <source>
    </source>
</evidence>
<evidence type="ECO:0007744" key="17">
    <source>
    </source>
</evidence>
<keyword id="KW-0025">Alternative splicing</keyword>
<keyword id="KW-0156">Chromatin regulator</keyword>
<keyword id="KW-0963">Cytoplasm</keyword>
<keyword id="KW-0378">Hydrolase</keyword>
<keyword id="KW-0479">Metal-binding</keyword>
<keyword id="KW-0539">Nucleus</keyword>
<keyword id="KW-0597">Phosphoprotein</keyword>
<keyword id="KW-1185">Reference proteome</keyword>
<keyword id="KW-0677">Repeat</keyword>
<keyword id="KW-0678">Repressor</keyword>
<keyword id="KW-0804">Transcription</keyword>
<keyword id="KW-0805">Transcription regulation</keyword>
<keyword id="KW-0862">Zinc</keyword>
<protein>
    <recommendedName>
        <fullName>Histone deacetylase 7</fullName>
        <shortName>HD7</shortName>
        <ecNumber evidence="4 5 13">3.5.1.98</ecNumber>
    </recommendedName>
    <alternativeName>
        <fullName>Histone deacetylase 7A</fullName>
        <shortName>HD7a</shortName>
    </alternativeName>
    <alternativeName>
        <fullName evidence="12">Protein deacetylase HDAC7</fullName>
        <ecNumber evidence="1">3.5.1.-</ecNumber>
    </alternativeName>
</protein>
<name>HDAC7_MOUSE</name>
<accession>Q8C2B3</accession>
<accession>Q8C2C9</accession>
<accession>Q8C8X4</accession>
<accession>Q8CB80</accession>
<accession>Q8CDA3</accession>
<accession>Q9JL72</accession>
<proteinExistence type="evidence at protein level"/>
<organism>
    <name type="scientific">Mus musculus</name>
    <name type="common">Mouse</name>
    <dbReference type="NCBI Taxonomy" id="10090"/>
    <lineage>
        <taxon>Eukaryota</taxon>
        <taxon>Metazoa</taxon>
        <taxon>Chordata</taxon>
        <taxon>Craniata</taxon>
        <taxon>Vertebrata</taxon>
        <taxon>Euteleostomi</taxon>
        <taxon>Mammalia</taxon>
        <taxon>Eutheria</taxon>
        <taxon>Euarchontoglires</taxon>
        <taxon>Glires</taxon>
        <taxon>Rodentia</taxon>
        <taxon>Myomorpha</taxon>
        <taxon>Muroidea</taxon>
        <taxon>Muridae</taxon>
        <taxon>Murinae</taxon>
        <taxon>Mus</taxon>
        <taxon>Mus</taxon>
    </lineage>
</organism>
<dbReference type="EC" id="3.5.1.98" evidence="4 5 13"/>
<dbReference type="EC" id="3.5.1.-" evidence="1"/>
<dbReference type="EMBL" id="AF207749">
    <property type="protein sequence ID" value="AAF31419.1"/>
    <property type="molecule type" value="mRNA"/>
</dbReference>
<dbReference type="EMBL" id="AK030863">
    <property type="protein sequence ID" value="BAC27161.1"/>
    <property type="molecule type" value="mRNA"/>
</dbReference>
<dbReference type="EMBL" id="AK036586">
    <property type="protein sequence ID" value="BAC29493.1"/>
    <property type="molecule type" value="mRNA"/>
</dbReference>
<dbReference type="EMBL" id="AK044287">
    <property type="protein sequence ID" value="BAC31856.1"/>
    <property type="molecule type" value="mRNA"/>
</dbReference>
<dbReference type="EMBL" id="AK088828">
    <property type="protein sequence ID" value="BAC40598.1"/>
    <property type="molecule type" value="mRNA"/>
</dbReference>
<dbReference type="EMBL" id="AK088945">
    <property type="protein sequence ID" value="BAC40666.1"/>
    <property type="molecule type" value="mRNA"/>
</dbReference>
<dbReference type="EMBL" id="BC057332">
    <property type="protein sequence ID" value="AAH57332.1"/>
    <property type="molecule type" value="mRNA"/>
</dbReference>
<dbReference type="CCDS" id="CCDS37188.1">
    <molecule id="Q8C2B3-1"/>
</dbReference>
<dbReference type="CCDS" id="CCDS57004.1">
    <molecule id="Q8C2B3-5"/>
</dbReference>
<dbReference type="CCDS" id="CCDS57005.1">
    <molecule id="Q8C2B3-2"/>
</dbReference>
<dbReference type="CCDS" id="CCDS57006.1">
    <molecule id="Q8C2B3-3"/>
</dbReference>
<dbReference type="CCDS" id="CCDS57007.1">
    <molecule id="Q8C2B3-4"/>
</dbReference>
<dbReference type="RefSeq" id="NP_001191204.1">
    <molecule id="Q8C2B3-3"/>
    <property type="nucleotide sequence ID" value="NM_001204275.1"/>
</dbReference>
<dbReference type="RefSeq" id="NP_001191205.1">
    <molecule id="Q8C2B3-2"/>
    <property type="nucleotide sequence ID" value="NM_001204276.1"/>
</dbReference>
<dbReference type="RefSeq" id="NP_001191206.1">
    <molecule id="Q8C2B3-4"/>
    <property type="nucleotide sequence ID" value="NM_001204277.1"/>
</dbReference>
<dbReference type="RefSeq" id="NP_001191207.1">
    <molecule id="Q8C2B3-5"/>
    <property type="nucleotide sequence ID" value="NM_001204278.1"/>
</dbReference>
<dbReference type="RefSeq" id="NP_062518.2">
    <molecule id="Q8C2B3-1"/>
    <property type="nucleotide sequence ID" value="NM_019572.3"/>
</dbReference>
<dbReference type="RefSeq" id="XP_006521268.1">
    <molecule id="Q8C2B3-3"/>
    <property type="nucleotide sequence ID" value="XM_006521205.3"/>
</dbReference>
<dbReference type="RefSeq" id="XP_006521270.1">
    <molecule id="Q8C2B3-3"/>
    <property type="nucleotide sequence ID" value="XM_006521207.5"/>
</dbReference>
<dbReference type="RefSeq" id="XP_006521271.1">
    <molecule id="Q8C2B3-3"/>
    <property type="nucleotide sequence ID" value="XM_006521208.5"/>
</dbReference>
<dbReference type="RefSeq" id="XP_006521272.1">
    <molecule id="Q8C2B3-3"/>
    <property type="nucleotide sequence ID" value="XM_006521209.3"/>
</dbReference>
<dbReference type="RefSeq" id="XP_006521273.1">
    <molecule id="Q8C2B3-3"/>
    <property type="nucleotide sequence ID" value="XM_006521210.4"/>
</dbReference>
<dbReference type="SMR" id="Q8C2B3"/>
<dbReference type="BioGRID" id="207862">
    <property type="interactions" value="8"/>
</dbReference>
<dbReference type="CORUM" id="Q8C2B3"/>
<dbReference type="DIP" id="DIP-42594N"/>
<dbReference type="ELM" id="Q8C2B3"/>
<dbReference type="FunCoup" id="Q8C2B3">
    <property type="interactions" value="2782"/>
</dbReference>
<dbReference type="IntAct" id="Q8C2B3">
    <property type="interactions" value="6"/>
</dbReference>
<dbReference type="MINT" id="Q8C2B3"/>
<dbReference type="STRING" id="10090.ENSMUSP00000112110"/>
<dbReference type="BindingDB" id="Q8C2B3"/>
<dbReference type="ChEMBL" id="CHEMBL3832944"/>
<dbReference type="GlyGen" id="Q8C2B3">
    <property type="glycosylation" value="1 site"/>
</dbReference>
<dbReference type="iPTMnet" id="Q8C2B3"/>
<dbReference type="PhosphoSitePlus" id="Q8C2B3"/>
<dbReference type="jPOST" id="Q8C2B3"/>
<dbReference type="PaxDb" id="10090-ENSMUSP00000085744"/>
<dbReference type="ProteomicsDB" id="269772">
    <molecule id="Q8C2B3-1"/>
</dbReference>
<dbReference type="ProteomicsDB" id="269773">
    <molecule id="Q8C2B3-2"/>
</dbReference>
<dbReference type="ProteomicsDB" id="269774">
    <molecule id="Q8C2B3-3"/>
</dbReference>
<dbReference type="ProteomicsDB" id="269775">
    <molecule id="Q8C2B3-4"/>
</dbReference>
<dbReference type="ProteomicsDB" id="269776">
    <molecule id="Q8C2B3-5"/>
</dbReference>
<dbReference type="ProteomicsDB" id="269777">
    <molecule id="Q8C2B3-6"/>
</dbReference>
<dbReference type="Pumba" id="Q8C2B3"/>
<dbReference type="Antibodypedia" id="1412">
    <property type="antibodies" value="656 antibodies from 43 providers"/>
</dbReference>
<dbReference type="DNASU" id="56233"/>
<dbReference type="Ensembl" id="ENSMUST00000079838.14">
    <molecule id="Q8C2B3-4"/>
    <property type="protein sequence ID" value="ENSMUSP00000078766.8"/>
    <property type="gene ID" value="ENSMUSG00000022475.20"/>
</dbReference>
<dbReference type="Ensembl" id="ENSMUST00000088402.12">
    <molecule id="Q8C2B3-1"/>
    <property type="protein sequence ID" value="ENSMUSP00000085744.6"/>
    <property type="gene ID" value="ENSMUSG00000022475.20"/>
</dbReference>
<dbReference type="Ensembl" id="ENSMUST00000116408.9">
    <molecule id="Q8C2B3-5"/>
    <property type="protein sequence ID" value="ENSMUSP00000112109.3"/>
    <property type="gene ID" value="ENSMUSG00000022475.20"/>
</dbReference>
<dbReference type="Ensembl" id="ENSMUST00000116409.9">
    <molecule id="Q8C2B3-3"/>
    <property type="protein sequence ID" value="ENSMUSP00000112110.3"/>
    <property type="gene ID" value="ENSMUSG00000022475.20"/>
</dbReference>
<dbReference type="Ensembl" id="ENSMUST00000118294.8">
    <molecule id="Q8C2B3-2"/>
    <property type="protein sequence ID" value="ENSMUSP00000113380.2"/>
    <property type="gene ID" value="ENSMUSG00000022475.20"/>
</dbReference>
<dbReference type="GeneID" id="56233"/>
<dbReference type="KEGG" id="mmu:56233"/>
<dbReference type="UCSC" id="uc007xle.2">
    <molecule id="Q8C2B3-1"/>
    <property type="organism name" value="mouse"/>
</dbReference>
<dbReference type="UCSC" id="uc007xlf.2">
    <molecule id="Q8C2B3-2"/>
    <property type="organism name" value="mouse"/>
</dbReference>
<dbReference type="UCSC" id="uc007xlg.2">
    <molecule id="Q8C2B3-4"/>
    <property type="organism name" value="mouse"/>
</dbReference>
<dbReference type="UCSC" id="uc007xlh.2">
    <molecule id="Q8C2B3-3"/>
    <property type="organism name" value="mouse"/>
</dbReference>
<dbReference type="AGR" id="MGI:1891835"/>
<dbReference type="CTD" id="51564"/>
<dbReference type="MGI" id="MGI:1891835">
    <property type="gene designation" value="Hdac7"/>
</dbReference>
<dbReference type="VEuPathDB" id="HostDB:ENSMUSG00000022475"/>
<dbReference type="eggNOG" id="KOG1343">
    <property type="taxonomic scope" value="Eukaryota"/>
</dbReference>
<dbReference type="GeneTree" id="ENSGT00940000159065"/>
<dbReference type="HOGENOM" id="CLU_006530_0_1_1"/>
<dbReference type="InParanoid" id="Q8C2B3"/>
<dbReference type="OMA" id="WPLSWTR"/>
<dbReference type="PhylomeDB" id="Q8C2B3"/>
<dbReference type="TreeFam" id="TF106173"/>
<dbReference type="BRENDA" id="3.5.1.98">
    <property type="organism ID" value="3474"/>
</dbReference>
<dbReference type="Reactome" id="R-MMU-3108214">
    <property type="pathway name" value="SUMOylation of DNA damage response and repair proteins"/>
</dbReference>
<dbReference type="Reactome" id="R-MMU-350054">
    <property type="pathway name" value="Notch-HLH transcription pathway"/>
</dbReference>
<dbReference type="BioGRID-ORCS" id="56233">
    <property type="hits" value="6 hits in 83 CRISPR screens"/>
</dbReference>
<dbReference type="ChiTaRS" id="Hdac7">
    <property type="organism name" value="mouse"/>
</dbReference>
<dbReference type="PRO" id="PR:Q8C2B3"/>
<dbReference type="Proteomes" id="UP000000589">
    <property type="component" value="Chromosome 15"/>
</dbReference>
<dbReference type="RNAct" id="Q8C2B3">
    <property type="molecule type" value="protein"/>
</dbReference>
<dbReference type="Bgee" id="ENSMUSG00000022475">
    <property type="expression patterns" value="Expressed in thymus and 210 other cell types or tissues"/>
</dbReference>
<dbReference type="ExpressionAtlas" id="Q8C2B3">
    <property type="expression patterns" value="baseline and differential"/>
</dbReference>
<dbReference type="GO" id="GO:0005737">
    <property type="term" value="C:cytoplasm"/>
    <property type="evidence" value="ECO:0000250"/>
    <property type="project" value="UniProtKB"/>
</dbReference>
<dbReference type="GO" id="GO:0005829">
    <property type="term" value="C:cytosol"/>
    <property type="evidence" value="ECO:0007669"/>
    <property type="project" value="Ensembl"/>
</dbReference>
<dbReference type="GO" id="GO:0000118">
    <property type="term" value="C:histone deacetylase complex"/>
    <property type="evidence" value="ECO:0000304"/>
    <property type="project" value="UniProtKB"/>
</dbReference>
<dbReference type="GO" id="GO:0005634">
    <property type="term" value="C:nucleus"/>
    <property type="evidence" value="ECO:0000314"/>
    <property type="project" value="UniProtKB"/>
</dbReference>
<dbReference type="GO" id="GO:0071889">
    <property type="term" value="F:14-3-3 protein binding"/>
    <property type="evidence" value="ECO:0000250"/>
    <property type="project" value="UniProtKB"/>
</dbReference>
<dbReference type="GO" id="GO:0003682">
    <property type="term" value="F:chromatin binding"/>
    <property type="evidence" value="ECO:0000314"/>
    <property type="project" value="MGI"/>
</dbReference>
<dbReference type="GO" id="GO:0140297">
    <property type="term" value="F:DNA-binding transcription factor binding"/>
    <property type="evidence" value="ECO:0000304"/>
    <property type="project" value="UniProtKB"/>
</dbReference>
<dbReference type="GO" id="GO:0004407">
    <property type="term" value="F:histone deacetylase activity"/>
    <property type="evidence" value="ECO:0000314"/>
    <property type="project" value="UniProtKB"/>
</dbReference>
<dbReference type="GO" id="GO:0141221">
    <property type="term" value="F:histone deacetylase activity, hydrolytic mechanism"/>
    <property type="evidence" value="ECO:0007669"/>
    <property type="project" value="UniProtKB-EC"/>
</dbReference>
<dbReference type="GO" id="GO:0046872">
    <property type="term" value="F:metal ion binding"/>
    <property type="evidence" value="ECO:0007669"/>
    <property type="project" value="UniProtKB-KW"/>
</dbReference>
<dbReference type="GO" id="GO:0005080">
    <property type="term" value="F:protein kinase C binding"/>
    <property type="evidence" value="ECO:0007669"/>
    <property type="project" value="Ensembl"/>
</dbReference>
<dbReference type="GO" id="GO:0033558">
    <property type="term" value="F:protein lysine deacetylase activity"/>
    <property type="evidence" value="ECO:0000250"/>
    <property type="project" value="UniProtKB"/>
</dbReference>
<dbReference type="GO" id="GO:0003714">
    <property type="term" value="F:transcription corepressor activity"/>
    <property type="evidence" value="ECO:0000314"/>
    <property type="project" value="MGI"/>
</dbReference>
<dbReference type="GO" id="GO:0042113">
    <property type="term" value="P:B cell activation"/>
    <property type="evidence" value="ECO:0000304"/>
    <property type="project" value="UniProtKB"/>
</dbReference>
<dbReference type="GO" id="GO:0030183">
    <property type="term" value="P:B cell differentiation"/>
    <property type="evidence" value="ECO:0000304"/>
    <property type="project" value="UniProtKB"/>
</dbReference>
<dbReference type="GO" id="GO:0007043">
    <property type="term" value="P:cell-cell junction assembly"/>
    <property type="evidence" value="ECO:0000315"/>
    <property type="project" value="MGI"/>
</dbReference>
<dbReference type="GO" id="GO:0006325">
    <property type="term" value="P:chromatin organization"/>
    <property type="evidence" value="ECO:0000304"/>
    <property type="project" value="UniProtKB"/>
</dbReference>
<dbReference type="GO" id="GO:0006954">
    <property type="term" value="P:inflammatory response"/>
    <property type="evidence" value="ECO:0000304"/>
    <property type="project" value="UniProtKB"/>
</dbReference>
<dbReference type="GO" id="GO:0045892">
    <property type="term" value="P:negative regulation of DNA-templated transcription"/>
    <property type="evidence" value="ECO:0000314"/>
    <property type="project" value="MGI"/>
</dbReference>
<dbReference type="GO" id="GO:0032703">
    <property type="term" value="P:negative regulation of interleukin-2 production"/>
    <property type="evidence" value="ECO:0007669"/>
    <property type="project" value="Ensembl"/>
</dbReference>
<dbReference type="GO" id="GO:1901223">
    <property type="term" value="P:negative regulation of non-canonical NF-kappaB signal transduction"/>
    <property type="evidence" value="ECO:0007669"/>
    <property type="project" value="Ensembl"/>
</dbReference>
<dbReference type="GO" id="GO:0045668">
    <property type="term" value="P:negative regulation of osteoblast differentiation"/>
    <property type="evidence" value="ECO:0007669"/>
    <property type="project" value="Ensembl"/>
</dbReference>
<dbReference type="GO" id="GO:0045843">
    <property type="term" value="P:negative regulation of striated muscle tissue development"/>
    <property type="evidence" value="ECO:0000304"/>
    <property type="project" value="UniProtKB"/>
</dbReference>
<dbReference type="GO" id="GO:0000122">
    <property type="term" value="P:negative regulation of transcription by RNA polymerase II"/>
    <property type="evidence" value="ECO:0000314"/>
    <property type="project" value="MGI"/>
</dbReference>
<dbReference type="GO" id="GO:0007399">
    <property type="term" value="P:nervous system development"/>
    <property type="evidence" value="ECO:0000304"/>
    <property type="project" value="UniProtKB"/>
</dbReference>
<dbReference type="GO" id="GO:0090050">
    <property type="term" value="P:positive regulation of cell migration involved in sprouting angiogenesis"/>
    <property type="evidence" value="ECO:0007669"/>
    <property type="project" value="Ensembl"/>
</dbReference>
<dbReference type="GO" id="GO:0050684">
    <property type="term" value="P:regulation of mRNA processing"/>
    <property type="evidence" value="ECO:0007669"/>
    <property type="project" value="Ensembl"/>
</dbReference>
<dbReference type="GO" id="GO:0001570">
    <property type="term" value="P:vasculogenesis"/>
    <property type="evidence" value="ECO:0000315"/>
    <property type="project" value="MGI"/>
</dbReference>
<dbReference type="CDD" id="cd10008">
    <property type="entry name" value="HDAC7"/>
    <property type="match status" value="1"/>
</dbReference>
<dbReference type="FunFam" id="3.40.800.20:FF:000002">
    <property type="entry name" value="Histone deacetylase"/>
    <property type="match status" value="1"/>
</dbReference>
<dbReference type="Gene3D" id="3.40.800.20">
    <property type="entry name" value="Histone deacetylase domain"/>
    <property type="match status" value="1"/>
</dbReference>
<dbReference type="InterPro" id="IPR046949">
    <property type="entry name" value="HDAC4/5/7/9"/>
</dbReference>
<dbReference type="InterPro" id="IPR050284">
    <property type="entry name" value="HDAC_PDAC"/>
</dbReference>
<dbReference type="InterPro" id="IPR000286">
    <property type="entry name" value="His_deacetylse"/>
</dbReference>
<dbReference type="InterPro" id="IPR023801">
    <property type="entry name" value="His_deacetylse_dom"/>
</dbReference>
<dbReference type="InterPro" id="IPR037138">
    <property type="entry name" value="His_deacetylse_dom_sf"/>
</dbReference>
<dbReference type="InterPro" id="IPR023696">
    <property type="entry name" value="Ureohydrolase_dom_sf"/>
</dbReference>
<dbReference type="PANTHER" id="PTHR10625:SF42">
    <property type="entry name" value="HISTONE DEACETYLASE 7"/>
    <property type="match status" value="1"/>
</dbReference>
<dbReference type="PANTHER" id="PTHR10625">
    <property type="entry name" value="HISTONE DEACETYLASE HDAC1-RELATED"/>
    <property type="match status" value="1"/>
</dbReference>
<dbReference type="Pfam" id="PF00850">
    <property type="entry name" value="Hist_deacetyl"/>
    <property type="match status" value="1"/>
</dbReference>
<dbReference type="PIRSF" id="PIRSF037911">
    <property type="entry name" value="HDAC_II_euk"/>
    <property type="match status" value="1"/>
</dbReference>
<dbReference type="PRINTS" id="PR01270">
    <property type="entry name" value="HDASUPER"/>
</dbReference>
<dbReference type="SUPFAM" id="SSF52768">
    <property type="entry name" value="Arginase/deacetylase"/>
    <property type="match status" value="1"/>
</dbReference>
<gene>
    <name type="primary">Hdac7</name>
    <name type="synonym">Hdac7a</name>
</gene>
<sequence>MHSPGAGCPALQPDTPGSQPQPMDLRVGQRPTVEPPPEPALLTLQHPQRLHRHLFLAGLHQQQRSAEPMRLSMDPPMPELQGGQQEQELRQLLNKDKSKRSAVASSVVKQKLAEVILKKQQAALERTVHPSSPSIPYRTLEPLDTEGAARSVLSSFLPPVPSLPTEPPEHFPLRKTVSEPNLKLRYKPKKSLERRKNPLLRKESAPPSLRRRPAETLGDSSPSSSSTPASGCSSPNDSEHGPNPALGSEADGDRRTHSTLGPRGPVLGNPHAPLFLHHGLEPEAGGTLPSRLQPILLLDPSVSHAPLWTVPGLGPLPFHFAQPLLTTERLSGSGLHRPLNRTRSEPLPPSATASPLLAPLQPRQDRLKPHVQLIKPAISPPQRPAKPSEKPRLRQIPSAEDLETDGGGVGPMANDGLEHRESGRGPPEGRGSISLQQHQQVPPWEQQHLAGRLSQGSPGDSVLIPLAQVGHRPLSRTQSSPAAPVSLLSPEPTCQTQVLNSSETPATGLVYDSVMLKHQCSCGDNSKHPEHAGRIQSIWSRLQERGLRSQCECLRGRKASLEELQSVHSERHVLLYGTNPLSRLKLDNGKLTGLLAQRTFVMLPCGGVGVDTDTIWNELHSSNAARWAAGSVTDLAFKVASRELKNGFAVVRPPGHHADHSTAMGFCFFNSVAIACRQLQQHGKASKILIVDWDVHHGNGTQQTFYQDPSVLYISLHRHDDGNFFPGSGAVDEVGTGSGEGFNVNVAWAGGLDPPMGDPEYLAAFRIVVMPIAREFAPDLVLVSAGFDAAEGHPAPLGGYHVSAKCFGYMTQQLMNLAGGAVVLALEGGHDLTAICDASEACVAALLGNKVDPLSEESWKQKPNLSAIRSLEAVVRVHRKYWGCMQRLASCPDSWLPRVPGADAEVEAVTALASLSVGILAEDRPSERLVEEEEPMNL</sequence>